<sequence length="418" mass="46736">MGQPGNRSVFLLAPNGSHAPDQDGTQERNDAWVVGMGIVMSLIVLAIVFGNVLVITAIARFERLQTVTNYFITSLACADLVMGLAVVPFGASHILMKMWTFGNFWCEFWTSIDVLCVTASIETLCVIAVDRYFAITSPFKYQSLLTKNKARVVILMVWIVSGLTSFLPIQMHWYRATHQEAINCYAKETCCDFFTNQAYAIASSIVSFYLPLVVMVFVYSRVFQVAQRQLQKIDKSEGRFHAQNLSQVEQDGRSGHGHRRASKFCLKEHKALKTLGIIMGTFTLCWLPFFIVNIVHVIQDNLIPKEVYILLNWVGYVNSAFNPLIYCRSPDFRIAFQELLCLRRSSLKAYGNGYSNNSNSRTDYAGEHSGGPLGQEKDSEVLCEDPPGTENLANRQGTVPNDSIDSQGQNGSTNDSLL</sequence>
<name>ADRB2_FELCA</name>
<feature type="chain" id="PRO_0000069129" description="Beta-2 adrenergic receptor">
    <location>
        <begin position="1"/>
        <end position="418"/>
    </location>
</feature>
<feature type="topological domain" description="Extracellular" evidence="1">
    <location>
        <begin position="1"/>
        <end position="34"/>
    </location>
</feature>
<feature type="transmembrane region" description="Helical; Name=1" evidence="1">
    <location>
        <begin position="35"/>
        <end position="58"/>
    </location>
</feature>
<feature type="topological domain" description="Cytoplasmic" evidence="1">
    <location>
        <begin position="59"/>
        <end position="71"/>
    </location>
</feature>
<feature type="transmembrane region" description="Helical; Name=2" evidence="1">
    <location>
        <begin position="72"/>
        <end position="95"/>
    </location>
</feature>
<feature type="topological domain" description="Extracellular" evidence="1">
    <location>
        <begin position="96"/>
        <end position="106"/>
    </location>
</feature>
<feature type="transmembrane region" description="Helical; Name=3" evidence="1">
    <location>
        <begin position="107"/>
        <end position="129"/>
    </location>
</feature>
<feature type="topological domain" description="Cytoplasmic" evidence="1">
    <location>
        <begin position="130"/>
        <end position="150"/>
    </location>
</feature>
<feature type="transmembrane region" description="Helical; Name=4" evidence="1">
    <location>
        <begin position="151"/>
        <end position="174"/>
    </location>
</feature>
<feature type="topological domain" description="Extracellular" evidence="1">
    <location>
        <begin position="175"/>
        <end position="196"/>
    </location>
</feature>
<feature type="transmembrane region" description="Helical; Name=5" evidence="1">
    <location>
        <begin position="197"/>
        <end position="220"/>
    </location>
</feature>
<feature type="topological domain" description="Cytoplasmic" evidence="1">
    <location>
        <begin position="221"/>
        <end position="274"/>
    </location>
</feature>
<feature type="transmembrane region" description="Helical; Name=6" evidence="1">
    <location>
        <begin position="275"/>
        <end position="298"/>
    </location>
</feature>
<feature type="topological domain" description="Extracellular" evidence="1">
    <location>
        <begin position="299"/>
        <end position="305"/>
    </location>
</feature>
<feature type="transmembrane region" description="Helical; Name=7" evidence="1">
    <location>
        <begin position="306"/>
        <end position="329"/>
    </location>
</feature>
<feature type="topological domain" description="Cytoplasmic" evidence="1">
    <location>
        <begin position="330"/>
        <end position="418"/>
    </location>
</feature>
<feature type="region of interest" description="Disordered" evidence="5">
    <location>
        <begin position="358"/>
        <end position="418"/>
    </location>
</feature>
<feature type="short sequence motif" description="PDZ-binding">
    <location>
        <begin position="415"/>
        <end position="418"/>
    </location>
</feature>
<feature type="compositionally biased region" description="Polar residues" evidence="5">
    <location>
        <begin position="391"/>
        <end position="418"/>
    </location>
</feature>
<feature type="modified residue" description="Phosphotyrosine" evidence="2">
    <location>
        <position position="141"/>
    </location>
</feature>
<feature type="modified residue" description="Phosphoserine" evidence="2">
    <location>
        <position position="246"/>
    </location>
</feature>
<feature type="modified residue" description="Phosphoserine; by PKA" evidence="3">
    <location>
        <position position="262"/>
    </location>
</feature>
<feature type="modified residue" description="Phosphoserine; by PKA" evidence="2">
    <location>
        <position position="345"/>
    </location>
</feature>
<feature type="modified residue" description="Phosphoserine; by PKA" evidence="2">
    <location>
        <position position="346"/>
    </location>
</feature>
<feature type="modified residue" description="Phosphoserine; by BARK" evidence="6">
    <location>
        <position position="355"/>
    </location>
</feature>
<feature type="modified residue" description="4-hydroxyproline" evidence="1">
    <location>
        <position position="387"/>
    </location>
</feature>
<feature type="modified residue" description="4-hydroxyproline" evidence="1">
    <location>
        <position position="400"/>
    </location>
</feature>
<feature type="lipid moiety-binding region" description="S-palmitoyl cysteine" evidence="2">
    <location>
        <position position="265"/>
    </location>
</feature>
<feature type="lipid moiety-binding region" description="S-palmitoyl cysteine" evidence="2">
    <location>
        <position position="341"/>
    </location>
</feature>
<feature type="glycosylation site" description="N-linked (GlcNAc...) asparagine" evidence="6">
    <location>
        <position position="6"/>
    </location>
</feature>
<feature type="glycosylation site" description="N-linked (GlcNAc...) asparagine" evidence="6">
    <location>
        <position position="15"/>
    </location>
</feature>
<feature type="disulfide bond" evidence="4">
    <location>
        <begin position="106"/>
        <end position="191"/>
    </location>
</feature>
<feature type="disulfide bond" evidence="4">
    <location>
        <begin position="184"/>
        <end position="190"/>
    </location>
</feature>
<gene>
    <name type="primary">ADRB2</name>
</gene>
<proteinExistence type="inferred from homology"/>
<evidence type="ECO:0000250" key="1"/>
<evidence type="ECO:0000250" key="2">
    <source>
        <dbReference type="UniProtKB" id="P07550"/>
    </source>
</evidence>
<evidence type="ECO:0000255" key="3"/>
<evidence type="ECO:0000255" key="4">
    <source>
        <dbReference type="PROSITE-ProRule" id="PRU00521"/>
    </source>
</evidence>
<evidence type="ECO:0000256" key="5">
    <source>
        <dbReference type="SAM" id="MobiDB-lite"/>
    </source>
</evidence>
<evidence type="ECO:0000305" key="6"/>
<accession>Q9TST5</accession>
<protein>
    <recommendedName>
        <fullName>Beta-2 adrenergic receptor</fullName>
    </recommendedName>
    <alternativeName>
        <fullName>Beta-2 adrenoreceptor</fullName>
        <shortName>Beta-2 adrenoceptor</shortName>
    </alternativeName>
</protein>
<reference key="1">
    <citation type="submission" date="1999-10" db="EMBL/GenBank/DDBJ databases">
        <title>Felis domesticus beta adrenergic receptor subtype 2.</title>
        <authorList>
            <person name="Cully D.F."/>
            <person name="Tremml G."/>
            <person name="Zachwieja S."/>
        </authorList>
    </citation>
    <scope>NUCLEOTIDE SEQUENCE [GENOMIC DNA]</scope>
</reference>
<comment type="function">
    <text evidence="2">Beta-adrenergic receptors mediate the catecholamine-induced activation of adenylate cyclase through the action of G proteins. The beta-2-adrenergic receptor binds epinephrine with an approximately 30-fold greater affinity than it does norepinephrine (By similarity).</text>
</comment>
<comment type="subunit">
    <text evidence="2">Binds NHERF1 and GPRASP1. Interacts with ARRB1 and ARRB2. Interacts with SRC (By similarity). Interacts with USP20 and USP33 (By similarity). Interacts with VHL; the interaction, which is increased on hydroxylation of ADRB2, ubiquitinates ADRB2 leading to its degradation. Interacts with EGLN3; the interaction hydroxylates ADRB2 facilitating VHL-E3 ligase-mediated ubiquitination. Interacts (via PDZ-binding motif) with SNX27 (via PDZ domain); the interaction is required when endocytosed to prevent degradation in lysosomes and promote recycling to the plasma membrane. Interacts with CNIH4. Interacts with ARRDC3. Interacts with NEDD4 (By similarity). Interacts with MARCHF2 (By similarity).</text>
</comment>
<comment type="subcellular location">
    <subcellularLocation>
        <location evidence="2">Cell membrane</location>
        <topology evidence="2">Multi-pass membrane protein</topology>
    </subcellularLocation>
    <subcellularLocation>
        <location evidence="2">Early endosome</location>
    </subcellularLocation>
    <subcellularLocation>
        <location evidence="2">Golgi apparatus</location>
    </subcellularLocation>
    <text evidence="2">Colocalizes with VHL at the cell membrane. Activated receptors are internalized into endosomes prior to their degradation in lysosomes. Activated receptors are also detected within the Golgi apparatus.</text>
</comment>
<comment type="PTM">
    <text evidence="1">Palmitoylated; may reduce accessibility of Ser-345 and Ser-346 by anchoring Cys-341 to the plasma membrane. Agonist stimulation promotes depalmitoylation and further allows Ser-345 and Ser-346 phosphorylation (By similarity).</text>
</comment>
<comment type="PTM">
    <text>Phosphorylated by PKA and BARK upon agonist stimulation, which mediates homologous desensitization of the receptor. PKA-mediated phosphorylation seems to facilitate phosphorylation by BARK.</text>
</comment>
<comment type="PTM">
    <text evidence="1">Phosphorylation of Tyr-141 is induced by insulin and leads to supersensitization of the receptor.</text>
</comment>
<comment type="PTM">
    <text evidence="1">Polyubiquitinated. Agonist-induced ubiquitination leads to sort internalized receptors to the lysosomes for degradation. Deubiquitination by USP20 and USP33, leads to ADRB2 recycling and resensitization after prolonged agonist stimulation. USP20 and USP33 are constitutively associated and are dissociated immediately after agonist stimulation. Ubiquitination by the VHL-E3 ligase complex is oxygen-dependent (By similarity).</text>
</comment>
<comment type="PTM">
    <text evidence="1">Hydroxylation by EGLN3 occurs only under normoxia and increases the interaction with VHL and the subsequent ubiquitination and degradation of ADRB2.</text>
</comment>
<comment type="PTM">
    <text evidence="2">Palmitoylated. Mainly palmitoylated at Cys-341. Palmitoylation may reduce accessibility of phosphorylation sites by anchoring the receptor to the plasma membrane. Agonist stimulation promotes depalmitoylation and further allows Ser-345 and Ser-346 phosphorylation. Also undergoes transient, ligand-induced palmitoylation at Cys-265 probably by ZDHHC9, ZDHHC14 and ZDHHC18 within the Golgi. Palmitoylation at Cys-265 requires phosphorylation by PKA and receptor internalization and stabilizes the receptor. Could be depalmitoylated by LYPLA1 at the plasma membrane.</text>
</comment>
<comment type="similarity">
    <text evidence="4">Belongs to the G-protein coupled receptor 1 family. Adrenergic receptor subfamily. ADRB2 sub-subfamily.</text>
</comment>
<dbReference type="EMBL" id="AF192345">
    <property type="protein sequence ID" value="AAF04304.1"/>
    <property type="molecule type" value="Genomic_DNA"/>
</dbReference>
<dbReference type="RefSeq" id="NP_001009247.1">
    <property type="nucleotide sequence ID" value="NM_001009247.1"/>
</dbReference>
<dbReference type="SMR" id="Q9TST5"/>
<dbReference type="FunCoup" id="Q9TST5">
    <property type="interactions" value="35"/>
</dbReference>
<dbReference type="STRING" id="9685.ENSFCAP00000007370"/>
<dbReference type="GlyCosmos" id="Q9TST5">
    <property type="glycosylation" value="2 sites, No reported glycans"/>
</dbReference>
<dbReference type="PaxDb" id="9685-ENSFCAP00000007370"/>
<dbReference type="Ensembl" id="ENSFCAT00000007956.4">
    <property type="protein sequence ID" value="ENSFCAP00000007370.2"/>
    <property type="gene ID" value="ENSFCAG00000007954.4"/>
</dbReference>
<dbReference type="GeneID" id="493767"/>
<dbReference type="KEGG" id="fca:493767"/>
<dbReference type="CTD" id="154"/>
<dbReference type="VGNC" id="VGNC:59658">
    <property type="gene designation" value="ADRB2"/>
</dbReference>
<dbReference type="eggNOG" id="KOG3656">
    <property type="taxonomic scope" value="Eukaryota"/>
</dbReference>
<dbReference type="GeneTree" id="ENSGT00940000159538"/>
<dbReference type="HOGENOM" id="CLU_009579_11_0_1"/>
<dbReference type="InParanoid" id="Q9TST5"/>
<dbReference type="OMA" id="EGHIRTQ"/>
<dbReference type="OrthoDB" id="5975661at2759"/>
<dbReference type="Proteomes" id="UP000011712">
    <property type="component" value="Chromosome A1"/>
</dbReference>
<dbReference type="Bgee" id="ENSFCAG00000007954">
    <property type="expression patterns" value="Expressed in liver and 8 other cell types or tissues"/>
</dbReference>
<dbReference type="GO" id="GO:0016324">
    <property type="term" value="C:apical plasma membrane"/>
    <property type="evidence" value="ECO:0007669"/>
    <property type="project" value="Ensembl"/>
</dbReference>
<dbReference type="GO" id="GO:0036064">
    <property type="term" value="C:ciliary basal body"/>
    <property type="evidence" value="ECO:0007669"/>
    <property type="project" value="Ensembl"/>
</dbReference>
<dbReference type="GO" id="GO:0005769">
    <property type="term" value="C:early endosome"/>
    <property type="evidence" value="ECO:0007669"/>
    <property type="project" value="UniProtKB-SubCell"/>
</dbReference>
<dbReference type="GO" id="GO:0005794">
    <property type="term" value="C:Golgi apparatus"/>
    <property type="evidence" value="ECO:0007669"/>
    <property type="project" value="UniProtKB-SubCell"/>
</dbReference>
<dbReference type="GO" id="GO:0045171">
    <property type="term" value="C:intercellular bridge"/>
    <property type="evidence" value="ECO:0007669"/>
    <property type="project" value="Ensembl"/>
</dbReference>
<dbReference type="GO" id="GO:0072686">
    <property type="term" value="C:mitotic spindle"/>
    <property type="evidence" value="ECO:0007669"/>
    <property type="project" value="Ensembl"/>
</dbReference>
<dbReference type="GO" id="GO:0098992">
    <property type="term" value="C:neuronal dense core vesicle"/>
    <property type="evidence" value="ECO:0007669"/>
    <property type="project" value="Ensembl"/>
</dbReference>
<dbReference type="GO" id="GO:0005634">
    <property type="term" value="C:nucleus"/>
    <property type="evidence" value="ECO:0007669"/>
    <property type="project" value="Ensembl"/>
</dbReference>
<dbReference type="GO" id="GO:0005886">
    <property type="term" value="C:plasma membrane"/>
    <property type="evidence" value="ECO:0000318"/>
    <property type="project" value="GO_Central"/>
</dbReference>
<dbReference type="GO" id="GO:0043235">
    <property type="term" value="C:receptor complex"/>
    <property type="evidence" value="ECO:0000250"/>
    <property type="project" value="HGNC-UCL"/>
</dbReference>
<dbReference type="GO" id="GO:0008179">
    <property type="term" value="F:adenylate cyclase binding"/>
    <property type="evidence" value="ECO:0007669"/>
    <property type="project" value="Ensembl"/>
</dbReference>
<dbReference type="GO" id="GO:0001540">
    <property type="term" value="F:amyloid-beta binding"/>
    <property type="evidence" value="ECO:0007669"/>
    <property type="project" value="Ensembl"/>
</dbReference>
<dbReference type="GO" id="GO:0004941">
    <property type="term" value="F:beta2-adrenergic receptor activity"/>
    <property type="evidence" value="ECO:0000250"/>
    <property type="project" value="HGNC-UCL"/>
</dbReference>
<dbReference type="GO" id="GO:0051380">
    <property type="term" value="F:norepinephrine binding"/>
    <property type="evidence" value="ECO:0000250"/>
    <property type="project" value="HGNC-UCL"/>
</dbReference>
<dbReference type="GO" id="GO:0015459">
    <property type="term" value="F:potassium channel regulator activity"/>
    <property type="evidence" value="ECO:0007669"/>
    <property type="project" value="Ensembl"/>
</dbReference>
<dbReference type="GO" id="GO:0042803">
    <property type="term" value="F:protein homodimerization activity"/>
    <property type="evidence" value="ECO:0000250"/>
    <property type="project" value="HGNC-UCL"/>
</dbReference>
<dbReference type="GO" id="GO:0044877">
    <property type="term" value="F:protein-containing complex binding"/>
    <property type="evidence" value="ECO:0007669"/>
    <property type="project" value="Ensembl"/>
</dbReference>
<dbReference type="GO" id="GO:0071880">
    <property type="term" value="P:adenylate cyclase-activating adrenergic receptor signaling pathway"/>
    <property type="evidence" value="ECO:0000250"/>
    <property type="project" value="HGNC-UCL"/>
</dbReference>
<dbReference type="GO" id="GO:0098990">
    <property type="term" value="P:AMPA selective glutamate receptor signaling pathway"/>
    <property type="evidence" value="ECO:0007669"/>
    <property type="project" value="Ensembl"/>
</dbReference>
<dbReference type="GO" id="GO:0045453">
    <property type="term" value="P:bone resorption"/>
    <property type="evidence" value="ECO:0007669"/>
    <property type="project" value="Ensembl"/>
</dbReference>
<dbReference type="GO" id="GO:0050873">
    <property type="term" value="P:brown fat cell differentiation"/>
    <property type="evidence" value="ECO:0007669"/>
    <property type="project" value="Ensembl"/>
</dbReference>
<dbReference type="GO" id="GO:1904646">
    <property type="term" value="P:cellular response to amyloid-beta"/>
    <property type="evidence" value="ECO:0007669"/>
    <property type="project" value="Ensembl"/>
</dbReference>
<dbReference type="GO" id="GO:0002024">
    <property type="term" value="P:diet induced thermogenesis"/>
    <property type="evidence" value="ECO:0007669"/>
    <property type="project" value="Ensembl"/>
</dbReference>
<dbReference type="GO" id="GO:0031649">
    <property type="term" value="P:heat generation"/>
    <property type="evidence" value="ECO:0007669"/>
    <property type="project" value="Ensembl"/>
</dbReference>
<dbReference type="GO" id="GO:0045744">
    <property type="term" value="P:negative regulation of G protein-coupled receptor signaling pathway"/>
    <property type="evidence" value="ECO:0000250"/>
    <property type="project" value="HGNC-UCL"/>
</dbReference>
<dbReference type="GO" id="GO:0040015">
    <property type="term" value="P:negative regulation of multicellular organism growth"/>
    <property type="evidence" value="ECO:0007669"/>
    <property type="project" value="Ensembl"/>
</dbReference>
<dbReference type="GO" id="GO:0045986">
    <property type="term" value="P:negative regulation of smooth muscle contraction"/>
    <property type="evidence" value="ECO:0007669"/>
    <property type="project" value="Ensembl"/>
</dbReference>
<dbReference type="GO" id="GO:0002025">
    <property type="term" value="P:norepinephrine-epinephrine-mediated vasodilation involved in regulation of systemic arterial blood pressure"/>
    <property type="evidence" value="ECO:0000318"/>
    <property type="project" value="GO_Central"/>
</dbReference>
<dbReference type="GO" id="GO:1901098">
    <property type="term" value="P:positive regulation of autophagosome maturation"/>
    <property type="evidence" value="ECO:0000250"/>
    <property type="project" value="GO_Central"/>
</dbReference>
<dbReference type="GO" id="GO:0030501">
    <property type="term" value="P:positive regulation of bone mineralization"/>
    <property type="evidence" value="ECO:0007669"/>
    <property type="project" value="Ensembl"/>
</dbReference>
<dbReference type="GO" id="GO:0141163">
    <property type="term" value="P:positive regulation of cAMP/PKA signal transduction"/>
    <property type="evidence" value="ECO:0007669"/>
    <property type="project" value="Ensembl"/>
</dbReference>
<dbReference type="GO" id="GO:0120162">
    <property type="term" value="P:positive regulation of cold-induced thermogenesis"/>
    <property type="evidence" value="ECO:0007669"/>
    <property type="project" value="Ensembl"/>
</dbReference>
<dbReference type="GO" id="GO:1904504">
    <property type="term" value="P:positive regulation of lipophagy"/>
    <property type="evidence" value="ECO:0000250"/>
    <property type="project" value="GO_Central"/>
</dbReference>
<dbReference type="GO" id="GO:0043410">
    <property type="term" value="P:positive regulation of MAPK cascade"/>
    <property type="evidence" value="ECO:0000250"/>
    <property type="project" value="HGNC-UCL"/>
</dbReference>
<dbReference type="GO" id="GO:0061885">
    <property type="term" value="P:positive regulation of mini excitatory postsynaptic potential"/>
    <property type="evidence" value="ECO:0007669"/>
    <property type="project" value="Ensembl"/>
</dbReference>
<dbReference type="GO" id="GO:0045944">
    <property type="term" value="P:positive regulation of transcription by RNA polymerase II"/>
    <property type="evidence" value="ECO:0007669"/>
    <property type="project" value="Ensembl"/>
</dbReference>
<dbReference type="GO" id="GO:0006898">
    <property type="term" value="P:receptor-mediated endocytosis"/>
    <property type="evidence" value="ECO:0000250"/>
    <property type="project" value="HGNC-UCL"/>
</dbReference>
<dbReference type="GO" id="GO:0002028">
    <property type="term" value="P:regulation of sodium ion transport"/>
    <property type="evidence" value="ECO:0007669"/>
    <property type="project" value="Ensembl"/>
</dbReference>
<dbReference type="GO" id="GO:0009409">
    <property type="term" value="P:response to cold"/>
    <property type="evidence" value="ECO:0007669"/>
    <property type="project" value="Ensembl"/>
</dbReference>
<dbReference type="GO" id="GO:0006939">
    <property type="term" value="P:smooth muscle contraction"/>
    <property type="evidence" value="ECO:0007669"/>
    <property type="project" value="Ensembl"/>
</dbReference>
<dbReference type="GO" id="GO:0006366">
    <property type="term" value="P:transcription by RNA polymerase II"/>
    <property type="evidence" value="ECO:0007669"/>
    <property type="project" value="Ensembl"/>
</dbReference>
<dbReference type="CDD" id="cd15957">
    <property type="entry name" value="7tmA_Beta2_AR"/>
    <property type="match status" value="1"/>
</dbReference>
<dbReference type="FunFam" id="1.20.1070.10:FF:000057">
    <property type="entry name" value="Beta-1 adrenergic receptor"/>
    <property type="match status" value="1"/>
</dbReference>
<dbReference type="Gene3D" id="1.20.1070.10">
    <property type="entry name" value="Rhodopsin 7-helix transmembrane proteins"/>
    <property type="match status" value="1"/>
</dbReference>
<dbReference type="InterPro" id="IPR002233">
    <property type="entry name" value="ADR_fam"/>
</dbReference>
<dbReference type="InterPro" id="IPR000332">
    <property type="entry name" value="ADRB2_rcpt"/>
</dbReference>
<dbReference type="InterPro" id="IPR000276">
    <property type="entry name" value="GPCR_Rhodpsn"/>
</dbReference>
<dbReference type="InterPro" id="IPR017452">
    <property type="entry name" value="GPCR_Rhodpsn_7TM"/>
</dbReference>
<dbReference type="PANTHER" id="PTHR24248">
    <property type="entry name" value="ADRENERGIC RECEPTOR-RELATED G-PROTEIN COUPLED RECEPTOR"/>
    <property type="match status" value="1"/>
</dbReference>
<dbReference type="PANTHER" id="PTHR24248:SF21">
    <property type="entry name" value="BETA-2 ADRENERGIC RECEPTOR"/>
    <property type="match status" value="1"/>
</dbReference>
<dbReference type="Pfam" id="PF00001">
    <property type="entry name" value="7tm_1"/>
    <property type="match status" value="1"/>
</dbReference>
<dbReference type="PRINTS" id="PR01103">
    <property type="entry name" value="ADRENERGICR"/>
</dbReference>
<dbReference type="PRINTS" id="PR00562">
    <property type="entry name" value="ADRENRGCB2AR"/>
</dbReference>
<dbReference type="PRINTS" id="PR00237">
    <property type="entry name" value="GPCRRHODOPSN"/>
</dbReference>
<dbReference type="SMART" id="SM01381">
    <property type="entry name" value="7TM_GPCR_Srsx"/>
    <property type="match status" value="1"/>
</dbReference>
<dbReference type="SUPFAM" id="SSF81321">
    <property type="entry name" value="Family A G protein-coupled receptor-like"/>
    <property type="match status" value="1"/>
</dbReference>
<dbReference type="PROSITE" id="PS00237">
    <property type="entry name" value="G_PROTEIN_RECEP_F1_1"/>
    <property type="match status" value="1"/>
</dbReference>
<dbReference type="PROSITE" id="PS50262">
    <property type="entry name" value="G_PROTEIN_RECEP_F1_2"/>
    <property type="match status" value="1"/>
</dbReference>
<organism>
    <name type="scientific">Felis catus</name>
    <name type="common">Cat</name>
    <name type="synonym">Felis silvestris catus</name>
    <dbReference type="NCBI Taxonomy" id="9685"/>
    <lineage>
        <taxon>Eukaryota</taxon>
        <taxon>Metazoa</taxon>
        <taxon>Chordata</taxon>
        <taxon>Craniata</taxon>
        <taxon>Vertebrata</taxon>
        <taxon>Euteleostomi</taxon>
        <taxon>Mammalia</taxon>
        <taxon>Eutheria</taxon>
        <taxon>Laurasiatheria</taxon>
        <taxon>Carnivora</taxon>
        <taxon>Feliformia</taxon>
        <taxon>Felidae</taxon>
        <taxon>Felinae</taxon>
        <taxon>Felis</taxon>
    </lineage>
</organism>
<keyword id="KW-1003">Cell membrane</keyword>
<keyword id="KW-1015">Disulfide bond</keyword>
<keyword id="KW-0967">Endosome</keyword>
<keyword id="KW-0297">G-protein coupled receptor</keyword>
<keyword id="KW-0325">Glycoprotein</keyword>
<keyword id="KW-0333">Golgi apparatus</keyword>
<keyword id="KW-0379">Hydroxylation</keyword>
<keyword id="KW-0449">Lipoprotein</keyword>
<keyword id="KW-0472">Membrane</keyword>
<keyword id="KW-0564">Palmitate</keyword>
<keyword id="KW-0597">Phosphoprotein</keyword>
<keyword id="KW-0675">Receptor</keyword>
<keyword id="KW-1185">Reference proteome</keyword>
<keyword id="KW-0807">Transducer</keyword>
<keyword id="KW-0812">Transmembrane</keyword>
<keyword id="KW-1133">Transmembrane helix</keyword>
<keyword id="KW-0832">Ubl conjugation</keyword>